<organism>
    <name type="scientific">Escherichia coli O157:H7</name>
    <dbReference type="NCBI Taxonomy" id="83334"/>
    <lineage>
        <taxon>Bacteria</taxon>
        <taxon>Pseudomonadati</taxon>
        <taxon>Pseudomonadota</taxon>
        <taxon>Gammaproteobacteria</taxon>
        <taxon>Enterobacterales</taxon>
        <taxon>Enterobacteriaceae</taxon>
        <taxon>Escherichia</taxon>
    </lineage>
</organism>
<dbReference type="EC" id="3.2.1.-" evidence="1"/>
<dbReference type="EMBL" id="AE005174">
    <property type="protein sequence ID" value="AAG56277.1"/>
    <property type="molecule type" value="Genomic_DNA"/>
</dbReference>
<dbReference type="EMBL" id="BA000007">
    <property type="protein sequence ID" value="BAB35519.1"/>
    <property type="molecule type" value="Genomic_DNA"/>
</dbReference>
<dbReference type="PIR" id="H90890">
    <property type="entry name" value="H90890"/>
</dbReference>
<dbReference type="RefSeq" id="NP_310123.1">
    <property type="nucleotide sequence ID" value="NC_002695.1"/>
</dbReference>
<dbReference type="RefSeq" id="WP_000350395.1">
    <property type="nucleotide sequence ID" value="NZ_VOAI01000034.1"/>
</dbReference>
<dbReference type="SMR" id="P64427"/>
<dbReference type="STRING" id="155864.Z2217"/>
<dbReference type="GeneID" id="917296"/>
<dbReference type="KEGG" id="ece:Z2217"/>
<dbReference type="KEGG" id="ecs:ECs_2096"/>
<dbReference type="PATRIC" id="fig|386585.9.peg.2201"/>
<dbReference type="eggNOG" id="COG1649">
    <property type="taxonomic scope" value="Bacteria"/>
</dbReference>
<dbReference type="HOGENOM" id="CLU_019247_0_1_6"/>
<dbReference type="OMA" id="RITMNHT"/>
<dbReference type="Proteomes" id="UP000000558">
    <property type="component" value="Chromosome"/>
</dbReference>
<dbReference type="Proteomes" id="UP000002519">
    <property type="component" value="Chromosome"/>
</dbReference>
<dbReference type="GO" id="GO:0009279">
    <property type="term" value="C:cell outer membrane"/>
    <property type="evidence" value="ECO:0007669"/>
    <property type="project" value="UniProtKB-SubCell"/>
</dbReference>
<dbReference type="GO" id="GO:0016798">
    <property type="term" value="F:hydrolase activity, acting on glycosyl bonds"/>
    <property type="evidence" value="ECO:0007669"/>
    <property type="project" value="UniProtKB-KW"/>
</dbReference>
<dbReference type="GO" id="GO:0071555">
    <property type="term" value="P:cell wall organization"/>
    <property type="evidence" value="ECO:0007669"/>
    <property type="project" value="UniProtKB-KW"/>
</dbReference>
<dbReference type="CDD" id="cd00551">
    <property type="entry name" value="AmyAc_family"/>
    <property type="match status" value="1"/>
</dbReference>
<dbReference type="Gene3D" id="3.20.20.80">
    <property type="entry name" value="Glycosidases"/>
    <property type="match status" value="1"/>
</dbReference>
<dbReference type="InterPro" id="IPR052177">
    <property type="entry name" value="Divisome_Glycosyl_Hydrolase"/>
</dbReference>
<dbReference type="InterPro" id="IPR003790">
    <property type="entry name" value="GHL10"/>
</dbReference>
<dbReference type="InterPro" id="IPR017853">
    <property type="entry name" value="Glycoside_hydrolase_SF"/>
</dbReference>
<dbReference type="PANTHER" id="PTHR43405">
    <property type="entry name" value="GLYCOSYL HYDROLASE DIGH"/>
    <property type="match status" value="1"/>
</dbReference>
<dbReference type="PANTHER" id="PTHR43405:SF1">
    <property type="entry name" value="GLYCOSYL HYDROLASE DIGH"/>
    <property type="match status" value="1"/>
</dbReference>
<dbReference type="Pfam" id="PF02638">
    <property type="entry name" value="GHL10"/>
    <property type="match status" value="1"/>
</dbReference>
<dbReference type="SUPFAM" id="SSF51445">
    <property type="entry name" value="(Trans)glycosidases"/>
    <property type="match status" value="1"/>
</dbReference>
<dbReference type="PROSITE" id="PS51257">
    <property type="entry name" value="PROKAR_LIPOPROTEIN"/>
    <property type="match status" value="1"/>
</dbReference>
<name>DIGH_ECO57</name>
<feature type="signal peptide" evidence="2">
    <location>
        <begin position="1"/>
        <end position="27"/>
    </location>
</feature>
<feature type="chain" id="PRO_0000013768" description="Glycosyl hydrolase DigH">
    <location>
        <begin position="28"/>
        <end position="439"/>
    </location>
</feature>
<feature type="region of interest" description="Disordered" evidence="3">
    <location>
        <begin position="34"/>
        <end position="54"/>
    </location>
</feature>
<feature type="lipid moiety-binding region" description="N-palmitoyl cysteine" evidence="2">
    <location>
        <position position="28"/>
    </location>
</feature>
<feature type="lipid moiety-binding region" description="S-diacylglycerol cysteine" evidence="2">
    <location>
        <position position="28"/>
    </location>
</feature>
<proteinExistence type="inferred from homology"/>
<gene>
    <name evidence="1" type="primary">digH</name>
    <name type="synonym">yddW</name>
    <name type="ordered locus">Z2217</name>
    <name type="ordered locus">ECs2096</name>
</gene>
<accession>P64427</accession>
<accession>P76130</accession>
<comment type="function">
    <text evidence="1">Divisome-localized glycosyl hydrolase that cleaves peptide-free (denuded) peptidoglycans.</text>
</comment>
<comment type="subcellular location">
    <subcellularLocation>
        <location evidence="1">Cell outer membrane</location>
        <topology evidence="2">Lipid-anchor</topology>
    </subcellularLocation>
    <text evidence="1">Localizes to the divisome.</text>
</comment>
<comment type="similarity">
    <text evidence="4">Belongs to the glycosyl hydrolase-like 10 (GHL10) family.</text>
</comment>
<reference key="1">
    <citation type="journal article" date="2001" name="Nature">
        <title>Genome sequence of enterohaemorrhagic Escherichia coli O157:H7.</title>
        <authorList>
            <person name="Perna N.T."/>
            <person name="Plunkett G. III"/>
            <person name="Burland V."/>
            <person name="Mau B."/>
            <person name="Glasner J.D."/>
            <person name="Rose D.J."/>
            <person name="Mayhew G.F."/>
            <person name="Evans P.S."/>
            <person name="Gregor J."/>
            <person name="Kirkpatrick H.A."/>
            <person name="Posfai G."/>
            <person name="Hackett J."/>
            <person name="Klink S."/>
            <person name="Boutin A."/>
            <person name="Shao Y."/>
            <person name="Miller L."/>
            <person name="Grotbeck E.J."/>
            <person name="Davis N.W."/>
            <person name="Lim A."/>
            <person name="Dimalanta E.T."/>
            <person name="Potamousis K."/>
            <person name="Apodaca J."/>
            <person name="Anantharaman T.S."/>
            <person name="Lin J."/>
            <person name="Yen G."/>
            <person name="Schwartz D.C."/>
            <person name="Welch R.A."/>
            <person name="Blattner F.R."/>
        </authorList>
    </citation>
    <scope>NUCLEOTIDE SEQUENCE [LARGE SCALE GENOMIC DNA]</scope>
    <source>
        <strain>O157:H7 / EDL933 / ATCC 700927 / EHEC</strain>
    </source>
</reference>
<reference key="2">
    <citation type="journal article" date="2001" name="DNA Res.">
        <title>Complete genome sequence of enterohemorrhagic Escherichia coli O157:H7 and genomic comparison with a laboratory strain K-12.</title>
        <authorList>
            <person name="Hayashi T."/>
            <person name="Makino K."/>
            <person name="Ohnishi M."/>
            <person name="Kurokawa K."/>
            <person name="Ishii K."/>
            <person name="Yokoyama K."/>
            <person name="Han C.-G."/>
            <person name="Ohtsubo E."/>
            <person name="Nakayama K."/>
            <person name="Murata T."/>
            <person name="Tanaka M."/>
            <person name="Tobe T."/>
            <person name="Iida T."/>
            <person name="Takami H."/>
            <person name="Honda T."/>
            <person name="Sasakawa C."/>
            <person name="Ogasawara N."/>
            <person name="Yasunaga T."/>
            <person name="Kuhara S."/>
            <person name="Shiba T."/>
            <person name="Hattori M."/>
            <person name="Shinagawa H."/>
        </authorList>
    </citation>
    <scope>NUCLEOTIDE SEQUENCE [LARGE SCALE GENOMIC DNA]</scope>
    <source>
        <strain>O157:H7 / Sakai / RIMD 0509952 / EHEC</strain>
    </source>
</reference>
<sequence>MDICSRNKKLTIRRPAILVALALLLCSCKSTPPESMVTPPAGSKPPATTQQSSQPMRGIWLATVSRLDWPPVSSVNISNPTSRARVQQQAMIDKLDHLQRLGINTVFFQVKPDGTALWPSKILPWSDLMTGKIGENPGYDPLQFMLDEAHKRGMKVHAWFNPYRVSVNTKPGTIRELNSTLSQQPASVYVQHRDWIRTSGDRFVLDPGIPEVQDWITSIVAEVVSRYPVDGVQFDDYFYTESPGSRLNDNETYRKYGGAFASKADWRRNNTQQLIAKVSHTIKSIKPGVEFGVSPAGVWRNRSHDPLGSDTRGAAAYDESYADTRRWVEQGLLDYIAPQIYWPFSRSAARYDVLAKWWADVVKPTRTRLYIGIAFYKVGEPSKIEPDWMINGGVPELKKQLDLNDAVPEISGTILFREDYLNKPQTQQAVSYLQSRWGS</sequence>
<keyword id="KW-0998">Cell outer membrane</keyword>
<keyword id="KW-0961">Cell wall biogenesis/degradation</keyword>
<keyword id="KW-0326">Glycosidase</keyword>
<keyword id="KW-0378">Hydrolase</keyword>
<keyword id="KW-0449">Lipoprotein</keyword>
<keyword id="KW-0472">Membrane</keyword>
<keyword id="KW-0564">Palmitate</keyword>
<keyword id="KW-1185">Reference proteome</keyword>
<keyword id="KW-0732">Signal</keyword>
<evidence type="ECO:0000250" key="1">
    <source>
        <dbReference type="UniProtKB" id="P64426"/>
    </source>
</evidence>
<evidence type="ECO:0000255" key="2">
    <source>
        <dbReference type="PROSITE-ProRule" id="PRU00303"/>
    </source>
</evidence>
<evidence type="ECO:0000256" key="3">
    <source>
        <dbReference type="SAM" id="MobiDB-lite"/>
    </source>
</evidence>
<evidence type="ECO:0000305" key="4"/>
<protein>
    <recommendedName>
        <fullName evidence="1">Glycosyl hydrolase DigH</fullName>
        <ecNumber evidence="1">3.2.1.-</ecNumber>
    </recommendedName>
    <alternativeName>
        <fullName evidence="1">Divisome-localized glycosyl hydrolase</fullName>
    </alternativeName>
</protein>